<dbReference type="EC" id="3.5.4.5" evidence="1"/>
<dbReference type="EMBL" id="CP000746">
    <property type="protein sequence ID" value="ABR73802.1"/>
    <property type="molecule type" value="Genomic_DNA"/>
</dbReference>
<dbReference type="RefSeq" id="WP_012072187.1">
    <property type="nucleotide sequence ID" value="NC_009655.1"/>
</dbReference>
<dbReference type="SMR" id="A6VLF5"/>
<dbReference type="STRING" id="339671.Asuc_0425"/>
<dbReference type="KEGG" id="asu:Asuc_0425"/>
<dbReference type="eggNOG" id="COG0295">
    <property type="taxonomic scope" value="Bacteria"/>
</dbReference>
<dbReference type="HOGENOM" id="CLU_052424_0_0_6"/>
<dbReference type="OrthoDB" id="9795347at2"/>
<dbReference type="Proteomes" id="UP000001114">
    <property type="component" value="Chromosome"/>
</dbReference>
<dbReference type="GO" id="GO:0005829">
    <property type="term" value="C:cytosol"/>
    <property type="evidence" value="ECO:0007669"/>
    <property type="project" value="TreeGrafter"/>
</dbReference>
<dbReference type="GO" id="GO:0004126">
    <property type="term" value="F:cytidine deaminase activity"/>
    <property type="evidence" value="ECO:0007669"/>
    <property type="project" value="UniProtKB-UniRule"/>
</dbReference>
<dbReference type="GO" id="GO:0042802">
    <property type="term" value="F:identical protein binding"/>
    <property type="evidence" value="ECO:0007669"/>
    <property type="project" value="UniProtKB-ARBA"/>
</dbReference>
<dbReference type="GO" id="GO:0008270">
    <property type="term" value="F:zinc ion binding"/>
    <property type="evidence" value="ECO:0007669"/>
    <property type="project" value="UniProtKB-UniRule"/>
</dbReference>
<dbReference type="GO" id="GO:0009972">
    <property type="term" value="P:cytidine deamination"/>
    <property type="evidence" value="ECO:0007669"/>
    <property type="project" value="InterPro"/>
</dbReference>
<dbReference type="CDD" id="cd01283">
    <property type="entry name" value="cytidine_deaminase"/>
    <property type="match status" value="1"/>
</dbReference>
<dbReference type="FunFam" id="3.40.140.10:FF:000007">
    <property type="entry name" value="Cytidine deaminase"/>
    <property type="match status" value="1"/>
</dbReference>
<dbReference type="Gene3D" id="3.40.140.10">
    <property type="entry name" value="Cytidine Deaminase, domain 2"/>
    <property type="match status" value="2"/>
</dbReference>
<dbReference type="HAMAP" id="MF_01558">
    <property type="entry name" value="Cyt_deam"/>
    <property type="match status" value="1"/>
</dbReference>
<dbReference type="InterPro" id="IPR016192">
    <property type="entry name" value="APOBEC/CMP_deaminase_Zn-bd"/>
</dbReference>
<dbReference type="InterPro" id="IPR002125">
    <property type="entry name" value="CMP_dCMP_dom"/>
</dbReference>
<dbReference type="InterPro" id="IPR013171">
    <property type="entry name" value="Cyd/dCyd_deaminase_Zn-bd"/>
</dbReference>
<dbReference type="InterPro" id="IPR050202">
    <property type="entry name" value="Cyt/Deoxycyt_deaminase"/>
</dbReference>
<dbReference type="InterPro" id="IPR016193">
    <property type="entry name" value="Cytidine_deaminase-like"/>
</dbReference>
<dbReference type="InterPro" id="IPR020797">
    <property type="entry name" value="Cytidine_deaminase_bacteria"/>
</dbReference>
<dbReference type="NCBIfam" id="NF006537">
    <property type="entry name" value="PRK09027.1"/>
    <property type="match status" value="1"/>
</dbReference>
<dbReference type="PANTHER" id="PTHR11644">
    <property type="entry name" value="CYTIDINE DEAMINASE"/>
    <property type="match status" value="1"/>
</dbReference>
<dbReference type="PANTHER" id="PTHR11644:SF2">
    <property type="entry name" value="CYTIDINE DEAMINASE"/>
    <property type="match status" value="1"/>
</dbReference>
<dbReference type="Pfam" id="PF00383">
    <property type="entry name" value="dCMP_cyt_deam_1"/>
    <property type="match status" value="1"/>
</dbReference>
<dbReference type="Pfam" id="PF08211">
    <property type="entry name" value="dCMP_cyt_deam_2"/>
    <property type="match status" value="1"/>
</dbReference>
<dbReference type="PIRSF" id="PIRSF006334">
    <property type="entry name" value="Cdd_plus_pseudo"/>
    <property type="match status" value="1"/>
</dbReference>
<dbReference type="SUPFAM" id="SSF53927">
    <property type="entry name" value="Cytidine deaminase-like"/>
    <property type="match status" value="2"/>
</dbReference>
<dbReference type="PROSITE" id="PS00903">
    <property type="entry name" value="CYT_DCMP_DEAMINASES_1"/>
    <property type="match status" value="1"/>
</dbReference>
<dbReference type="PROSITE" id="PS51747">
    <property type="entry name" value="CYT_DCMP_DEAMINASES_2"/>
    <property type="match status" value="2"/>
</dbReference>
<organism>
    <name type="scientific">Actinobacillus succinogenes (strain ATCC 55618 / DSM 22257 / CCUG 43843 / 130Z)</name>
    <dbReference type="NCBI Taxonomy" id="339671"/>
    <lineage>
        <taxon>Bacteria</taxon>
        <taxon>Pseudomonadati</taxon>
        <taxon>Pseudomonadota</taxon>
        <taxon>Gammaproteobacteria</taxon>
        <taxon>Pasteurellales</taxon>
        <taxon>Pasteurellaceae</taxon>
        <taxon>Actinobacillus</taxon>
    </lineage>
</organism>
<gene>
    <name evidence="1" type="primary">cdd</name>
    <name type="ordered locus">Asuc_0425</name>
</gene>
<proteinExistence type="inferred from homology"/>
<feature type="chain" id="PRO_1000073581" description="Cytidine deaminase">
    <location>
        <begin position="1"/>
        <end position="296"/>
    </location>
</feature>
<feature type="domain" description="CMP/dCMP-type deaminase 1" evidence="2">
    <location>
        <begin position="52"/>
        <end position="172"/>
    </location>
</feature>
<feature type="domain" description="CMP/dCMP-type deaminase 2" evidence="2">
    <location>
        <begin position="191"/>
        <end position="296"/>
    </location>
</feature>
<feature type="active site" description="Proton donor" evidence="1">
    <location>
        <position position="108"/>
    </location>
</feature>
<feature type="binding site" evidence="1">
    <location>
        <begin position="93"/>
        <end position="95"/>
    </location>
    <ligand>
        <name>substrate</name>
    </ligand>
</feature>
<feature type="binding site" evidence="1">
    <location>
        <position position="106"/>
    </location>
    <ligand>
        <name>Zn(2+)</name>
        <dbReference type="ChEBI" id="CHEBI:29105"/>
        <note>catalytic</note>
    </ligand>
</feature>
<feature type="binding site" evidence="1">
    <location>
        <position position="133"/>
    </location>
    <ligand>
        <name>Zn(2+)</name>
        <dbReference type="ChEBI" id="CHEBI:29105"/>
        <note>catalytic</note>
    </ligand>
</feature>
<feature type="binding site" evidence="1">
    <location>
        <position position="136"/>
    </location>
    <ligand>
        <name>Zn(2+)</name>
        <dbReference type="ChEBI" id="CHEBI:29105"/>
        <note>catalytic</note>
    </ligand>
</feature>
<protein>
    <recommendedName>
        <fullName evidence="1">Cytidine deaminase</fullName>
        <ecNumber evidence="1">3.5.4.5</ecNumber>
    </recommendedName>
    <alternativeName>
        <fullName evidence="1">Cytidine aminohydrolase</fullName>
        <shortName evidence="1">CDA</shortName>
    </alternativeName>
</protein>
<keyword id="KW-0378">Hydrolase</keyword>
<keyword id="KW-0479">Metal-binding</keyword>
<keyword id="KW-1185">Reference proteome</keyword>
<keyword id="KW-0862">Zinc</keyword>
<reference key="1">
    <citation type="journal article" date="2010" name="BMC Genomics">
        <title>A genomic perspective on the potential of Actinobacillus succinogenes for industrial succinate production.</title>
        <authorList>
            <person name="McKinlay J.B."/>
            <person name="Laivenieks M."/>
            <person name="Schindler B.D."/>
            <person name="McKinlay A.A."/>
            <person name="Siddaramappa S."/>
            <person name="Challacombe J.F."/>
            <person name="Lowry S.R."/>
            <person name="Clum A."/>
            <person name="Lapidus A.L."/>
            <person name="Burkhart K.B."/>
            <person name="Harkins V."/>
            <person name="Vieille C."/>
        </authorList>
    </citation>
    <scope>NUCLEOTIDE SEQUENCE [LARGE SCALE GENOMIC DNA]</scope>
    <source>
        <strain>ATCC 55618 / DSM 22257 / CCUG 43843 / 130Z</strain>
    </source>
</reference>
<name>CDD_ACTSZ</name>
<evidence type="ECO:0000255" key="1">
    <source>
        <dbReference type="HAMAP-Rule" id="MF_01558"/>
    </source>
</evidence>
<evidence type="ECO:0000255" key="2">
    <source>
        <dbReference type="PROSITE-ProRule" id="PRU01083"/>
    </source>
</evidence>
<sequence length="296" mass="32334">MNDCIGKRLDKLINESQDEVLKRVVGQILEQNGKARISQDWVRRCGDDFNLTAVELALRCLPVAACYASAPVSHFNVGAVAVGQSGAFYFGANQEFSGDAVQQTVHAEQSAVSHAWLAGEVALTDMVVNYTPCGHCRQFMNELNSADRLQIHLPHSRNNRLHSYLPDAFGPKDLNISRVLFDPQPHSFGFTHADPLVQAAADAAEQAYAPYSRALSGVALQVGTQSITGRYAENAAFNPSFLPLQCALNYRRLSGLSDVPVSRIVMAESQGGLSHRSITEQLAHSYLGLEIEYFAL</sequence>
<accession>A6VLF5</accession>
<comment type="function">
    <text evidence="1">This enzyme scavenges exogenous and endogenous cytidine and 2'-deoxycytidine for UMP synthesis.</text>
</comment>
<comment type="catalytic activity">
    <reaction evidence="1">
        <text>cytidine + H2O + H(+) = uridine + NH4(+)</text>
        <dbReference type="Rhea" id="RHEA:16069"/>
        <dbReference type="ChEBI" id="CHEBI:15377"/>
        <dbReference type="ChEBI" id="CHEBI:15378"/>
        <dbReference type="ChEBI" id="CHEBI:16704"/>
        <dbReference type="ChEBI" id="CHEBI:17562"/>
        <dbReference type="ChEBI" id="CHEBI:28938"/>
        <dbReference type="EC" id="3.5.4.5"/>
    </reaction>
</comment>
<comment type="catalytic activity">
    <reaction evidence="1">
        <text>2'-deoxycytidine + H2O + H(+) = 2'-deoxyuridine + NH4(+)</text>
        <dbReference type="Rhea" id="RHEA:13433"/>
        <dbReference type="ChEBI" id="CHEBI:15377"/>
        <dbReference type="ChEBI" id="CHEBI:15378"/>
        <dbReference type="ChEBI" id="CHEBI:15698"/>
        <dbReference type="ChEBI" id="CHEBI:16450"/>
        <dbReference type="ChEBI" id="CHEBI:28938"/>
        <dbReference type="EC" id="3.5.4.5"/>
    </reaction>
</comment>
<comment type="cofactor">
    <cofactor evidence="1">
        <name>Zn(2+)</name>
        <dbReference type="ChEBI" id="CHEBI:29105"/>
    </cofactor>
    <text evidence="1">Binds 1 zinc ion.</text>
</comment>
<comment type="subunit">
    <text evidence="1">Homodimer.</text>
</comment>
<comment type="similarity">
    <text evidence="1">Belongs to the cytidine and deoxycytidylate deaminase family.</text>
</comment>